<accession>Q9XWJ1</accession>
<feature type="chain" id="PRO_0000378186" description="Nonsense-mediated mRNA decay factor SMG9">
    <location>
        <begin position="1"/>
        <end position="385"/>
    </location>
</feature>
<feature type="region of interest" description="Disordered" evidence="2">
    <location>
        <begin position="1"/>
        <end position="32"/>
    </location>
</feature>
<feature type="strand" evidence="7">
    <location>
        <begin position="63"/>
        <end position="66"/>
    </location>
</feature>
<feature type="helix" evidence="7">
    <location>
        <begin position="68"/>
        <end position="70"/>
    </location>
</feature>
<feature type="helix" evidence="7">
    <location>
        <begin position="77"/>
        <end position="79"/>
    </location>
</feature>
<feature type="strand" evidence="7">
    <location>
        <begin position="87"/>
        <end position="92"/>
    </location>
</feature>
<feature type="helix" evidence="6">
    <location>
        <begin position="95"/>
        <end position="97"/>
    </location>
</feature>
<feature type="helix" evidence="7">
    <location>
        <begin position="99"/>
        <end position="107"/>
    </location>
</feature>
<feature type="helix" evidence="7">
    <location>
        <begin position="115"/>
        <end position="117"/>
    </location>
</feature>
<feature type="strand" evidence="7">
    <location>
        <begin position="138"/>
        <end position="143"/>
    </location>
</feature>
<feature type="strand" evidence="7">
    <location>
        <begin position="146"/>
        <end position="151"/>
    </location>
</feature>
<feature type="helix" evidence="7">
    <location>
        <begin position="173"/>
        <end position="190"/>
    </location>
</feature>
<feature type="strand" evidence="7">
    <location>
        <begin position="192"/>
        <end position="202"/>
    </location>
</feature>
<feature type="helix" evidence="7">
    <location>
        <begin position="204"/>
        <end position="213"/>
    </location>
</feature>
<feature type="strand" evidence="7">
    <location>
        <begin position="233"/>
        <end position="239"/>
    </location>
</feature>
<feature type="helix" evidence="7">
    <location>
        <begin position="245"/>
        <end position="247"/>
    </location>
</feature>
<feature type="helix" evidence="7">
    <location>
        <begin position="249"/>
        <end position="262"/>
    </location>
</feature>
<feature type="turn" evidence="7">
    <location>
        <begin position="263"/>
        <end position="265"/>
    </location>
</feature>
<feature type="strand" evidence="7">
    <location>
        <begin position="267"/>
        <end position="271"/>
    </location>
</feature>
<feature type="strand" evidence="7">
    <location>
        <begin position="277"/>
        <end position="281"/>
    </location>
</feature>
<feature type="helix" evidence="7">
    <location>
        <begin position="306"/>
        <end position="318"/>
    </location>
</feature>
<feature type="turn" evidence="7">
    <location>
        <begin position="319"/>
        <end position="321"/>
    </location>
</feature>
<feature type="strand" evidence="7">
    <location>
        <begin position="326"/>
        <end position="329"/>
    </location>
</feature>
<feature type="helix" evidence="7">
    <location>
        <begin position="335"/>
        <end position="347"/>
    </location>
</feature>
<feature type="helix" evidence="7">
    <location>
        <begin position="349"/>
        <end position="363"/>
    </location>
</feature>
<reference key="1">
    <citation type="journal article" date="1998" name="Science">
        <title>Genome sequence of the nematode C. elegans: a platform for investigating biology.</title>
        <authorList>
            <consortium name="The C. elegans sequencing consortium"/>
        </authorList>
    </citation>
    <scope>NUCLEOTIDE SEQUENCE [LARGE SCALE GENOMIC DNA]</scope>
    <source>
        <strain>Bristol N2</strain>
    </source>
</reference>
<reference key="2">
    <citation type="journal article" date="2009" name="Genes Dev.">
        <title>SMG-8 and SMG-9, two novel subunits of the SMG-1 complex, regulate remodeling of the mRNA surveillance complex during nonsense-mediated mRNA decay.</title>
        <authorList>
            <person name="Yamashita A."/>
            <person name="Izumi N."/>
            <person name="Kashima I."/>
            <person name="Ohnishi T."/>
            <person name="Saari B."/>
            <person name="Katsuhata Y."/>
            <person name="Muramatsu R."/>
            <person name="Morita T."/>
            <person name="Iwamatsu A."/>
            <person name="Hachiya T."/>
            <person name="Kurata R."/>
            <person name="Hirano H."/>
            <person name="Anderson P."/>
            <person name="Ohno S."/>
        </authorList>
    </citation>
    <scope>FUNCTION</scope>
    <scope>DISRUPTION PHENOTYPE</scope>
</reference>
<protein>
    <recommendedName>
        <fullName evidence="1">Nonsense-mediated mRNA decay factor SMG9</fullName>
    </recommendedName>
    <alternativeName>
        <fullName evidence="5">Suppressor with morphogenetic effect on genitalia protein 9</fullName>
    </alternativeName>
</protein>
<keyword id="KW-0002">3D-structure</keyword>
<keyword id="KW-0866">Nonsense-mediated mRNA decay</keyword>
<keyword id="KW-1185">Reference proteome</keyword>
<dbReference type="EMBL" id="AL032646">
    <property type="protein sequence ID" value="CAA21676.1"/>
    <property type="molecule type" value="Genomic_DNA"/>
</dbReference>
<dbReference type="PIR" id="T27143">
    <property type="entry name" value="T27143"/>
</dbReference>
<dbReference type="RefSeq" id="NP_497058.1">
    <property type="nucleotide sequence ID" value="NM_064657.4"/>
</dbReference>
<dbReference type="PDB" id="5NKK">
    <property type="method" value="X-ray"/>
    <property type="resolution" value="2.64 A"/>
    <property type="chains" value="B/D/F=59-375"/>
</dbReference>
<dbReference type="PDB" id="5NKM">
    <property type="method" value="X-ray"/>
    <property type="resolution" value="2.49 A"/>
    <property type="chains" value="B=59-375, D/F=59-363"/>
</dbReference>
<dbReference type="PDBsum" id="5NKK"/>
<dbReference type="PDBsum" id="5NKM"/>
<dbReference type="SMR" id="Q9XWJ1"/>
<dbReference type="BioGRID" id="40413">
    <property type="interactions" value="3"/>
</dbReference>
<dbReference type="FunCoup" id="Q9XWJ1">
    <property type="interactions" value="11"/>
</dbReference>
<dbReference type="STRING" id="6239.Y54E2A.2.1"/>
<dbReference type="PaxDb" id="6239-Y54E2A.2"/>
<dbReference type="PeptideAtlas" id="Q9XWJ1"/>
<dbReference type="EnsemblMetazoa" id="Y54E2A.2.1">
    <property type="protein sequence ID" value="Y54E2A.2.1"/>
    <property type="gene ID" value="WBGene00013188"/>
</dbReference>
<dbReference type="EnsemblMetazoa" id="Y54E2A.2.2">
    <property type="protein sequence ID" value="Y54E2A.2.2"/>
    <property type="gene ID" value="WBGene00013188"/>
</dbReference>
<dbReference type="EnsemblMetazoa" id="Y54E2A.2.3">
    <property type="protein sequence ID" value="Y54E2A.2.3"/>
    <property type="gene ID" value="WBGene00013188"/>
</dbReference>
<dbReference type="EnsemblMetazoa" id="Y54E2A.2.4">
    <property type="protein sequence ID" value="Y54E2A.2.4"/>
    <property type="gene ID" value="WBGene00013188"/>
</dbReference>
<dbReference type="GeneID" id="175132"/>
<dbReference type="KEGG" id="cel:CELE_Y54E2A.2"/>
<dbReference type="UCSC" id="Y54E2A.2">
    <property type="organism name" value="c. elegans"/>
</dbReference>
<dbReference type="AGR" id="WB:WBGene00013188"/>
<dbReference type="CTD" id="175132"/>
<dbReference type="WormBase" id="Y54E2A.2">
    <property type="protein sequence ID" value="CE20301"/>
    <property type="gene ID" value="WBGene00013188"/>
    <property type="gene designation" value="smg-9"/>
</dbReference>
<dbReference type="eggNOG" id="KOG4181">
    <property type="taxonomic scope" value="Eukaryota"/>
</dbReference>
<dbReference type="GeneTree" id="ENSGT00390000003568"/>
<dbReference type="HOGENOM" id="CLU_698769_0_0_1"/>
<dbReference type="InParanoid" id="Q9XWJ1"/>
<dbReference type="OMA" id="MYREYVF"/>
<dbReference type="OrthoDB" id="79514at2759"/>
<dbReference type="PhylomeDB" id="Q9XWJ1"/>
<dbReference type="Reactome" id="R-CEL-975957">
    <property type="pathway name" value="Nonsense Mediated Decay (NMD) enhanced by the Exon Junction Complex (EJC)"/>
</dbReference>
<dbReference type="PRO" id="PR:Q9XWJ1"/>
<dbReference type="Proteomes" id="UP000001940">
    <property type="component" value="Chromosome II"/>
</dbReference>
<dbReference type="Bgee" id="WBGene00013188">
    <property type="expression patterns" value="Expressed in germ line (C elegans) and 4 other cell types or tissues"/>
</dbReference>
<dbReference type="GO" id="GO:0140313">
    <property type="term" value="F:molecular sequestering activity"/>
    <property type="evidence" value="ECO:0000269"/>
    <property type="project" value="DisProt"/>
</dbReference>
<dbReference type="GO" id="GO:0000184">
    <property type="term" value="P:nuclear-transcribed mRNA catabolic process, nonsense-mediated decay"/>
    <property type="evidence" value="ECO:0000315"/>
    <property type="project" value="UniProtKB"/>
</dbReference>
<dbReference type="DisProt" id="DP03048"/>
<dbReference type="Gene3D" id="3.40.50.300">
    <property type="entry name" value="P-loop containing nucleotide triphosphate hydrolases"/>
    <property type="match status" value="1"/>
</dbReference>
<dbReference type="InterPro" id="IPR027417">
    <property type="entry name" value="P-loop_NTPase"/>
</dbReference>
<dbReference type="InterPro" id="IPR039177">
    <property type="entry name" value="SMG9"/>
</dbReference>
<dbReference type="PANTHER" id="PTHR14270">
    <property type="entry name" value="NONSENSE-MEDIATED MRNA DECAY FACTOR SMG9"/>
    <property type="match status" value="1"/>
</dbReference>
<dbReference type="PANTHER" id="PTHR14270:SF0">
    <property type="entry name" value="NONSENSE-MEDIATED MRNA DECAY FACTOR SMG9"/>
    <property type="match status" value="1"/>
</dbReference>
<dbReference type="SUPFAM" id="SSF52540">
    <property type="entry name" value="P-loop containing nucleoside triphosphate hydrolases"/>
    <property type="match status" value="1"/>
</dbReference>
<name>SMG9_CAEEL</name>
<gene>
    <name type="primary">smg-9</name>
    <name type="ORF">Y54E2A.2</name>
</gene>
<sequence>MKKVEILKTSRPSSAGGAARPSTASPTHGAPKIAIKTRPVADDVAPTAATVIEPSQKAMKESVRFLTDFGEISDAISDLLTSSPNFNVISAIGPQGAGKSTLLSMLAGNNSRQMYREYVFRPVSREANEQSRHQTIQIDIYIVNHQIFLDCQPMYSFSIMEGLPKVRGGRFDDSTAMSDTLRLTAFLLYVSHTVLVVSETHYDKVIIDTLRVAEQIRPYLAIFRPKLAIDRKTNLVFIKTKASSIDLAPTVIREREELLRLSFQDSRWLKVSQEPFKTLIVLEEIRVRREHLFEEGDEPDEAASLNEFDEQIAELREELQKNREDFTVETAAMDEKKWLDMCREVIRDKTLHKTLKEYQRAMTDGVRTHFDNGFHAERDANKFFS</sequence>
<evidence type="ECO:0000250" key="1">
    <source>
        <dbReference type="UniProtKB" id="Q9H0W8"/>
    </source>
</evidence>
<evidence type="ECO:0000256" key="2">
    <source>
        <dbReference type="SAM" id="MobiDB-lite"/>
    </source>
</evidence>
<evidence type="ECO:0000269" key="3">
    <source>
    </source>
</evidence>
<evidence type="ECO:0000305" key="4"/>
<evidence type="ECO:0000312" key="5">
    <source>
        <dbReference type="WormBase" id="Y54E2A.2"/>
    </source>
</evidence>
<evidence type="ECO:0007829" key="6">
    <source>
        <dbReference type="PDB" id="5NKK"/>
    </source>
</evidence>
<evidence type="ECO:0007829" key="7">
    <source>
        <dbReference type="PDB" id="5NKM"/>
    </source>
</evidence>
<organism>
    <name type="scientific">Caenorhabditis elegans</name>
    <dbReference type="NCBI Taxonomy" id="6239"/>
    <lineage>
        <taxon>Eukaryota</taxon>
        <taxon>Metazoa</taxon>
        <taxon>Ecdysozoa</taxon>
        <taxon>Nematoda</taxon>
        <taxon>Chromadorea</taxon>
        <taxon>Rhabditida</taxon>
        <taxon>Rhabditina</taxon>
        <taxon>Rhabditomorpha</taxon>
        <taxon>Rhabditoidea</taxon>
        <taxon>Rhabditidae</taxon>
        <taxon>Peloderinae</taxon>
        <taxon>Caenorhabditis</taxon>
    </lineage>
</organism>
<comment type="function">
    <text evidence="3">Involved in nonsense-mediated decay (NMD) of mRNAs containing premature stop codons. Probable component of kinase complex containing smg-1 and recruited to stalled ribosomes.</text>
</comment>
<comment type="disruption phenotype">
    <text evidence="3">Defects in nonsense-mediated decay (NMD).</text>
</comment>
<comment type="similarity">
    <text evidence="4">Belongs to the SMG9 family.</text>
</comment>
<proteinExistence type="evidence at protein level"/>